<evidence type="ECO:0000255" key="1">
    <source>
        <dbReference type="HAMAP-Rule" id="MF_00318"/>
    </source>
</evidence>
<organism>
    <name type="scientific">Campylobacter jejuni subsp. doylei (strain ATCC BAA-1458 / RM4099 / 269.97)</name>
    <dbReference type="NCBI Taxonomy" id="360109"/>
    <lineage>
        <taxon>Bacteria</taxon>
        <taxon>Pseudomonadati</taxon>
        <taxon>Campylobacterota</taxon>
        <taxon>Epsilonproteobacteria</taxon>
        <taxon>Campylobacterales</taxon>
        <taxon>Campylobacteraceae</taxon>
        <taxon>Campylobacter</taxon>
    </lineage>
</organism>
<name>ENO_CAMJD</name>
<comment type="function">
    <text evidence="1">Catalyzes the reversible conversion of 2-phosphoglycerate (2-PG) into phosphoenolpyruvate (PEP). It is essential for the degradation of carbohydrates via glycolysis.</text>
</comment>
<comment type="catalytic activity">
    <reaction evidence="1">
        <text>(2R)-2-phosphoglycerate = phosphoenolpyruvate + H2O</text>
        <dbReference type="Rhea" id="RHEA:10164"/>
        <dbReference type="ChEBI" id="CHEBI:15377"/>
        <dbReference type="ChEBI" id="CHEBI:58289"/>
        <dbReference type="ChEBI" id="CHEBI:58702"/>
        <dbReference type="EC" id="4.2.1.11"/>
    </reaction>
</comment>
<comment type="cofactor">
    <cofactor evidence="1">
        <name>Mg(2+)</name>
        <dbReference type="ChEBI" id="CHEBI:18420"/>
    </cofactor>
    <text evidence="1">Binds a second Mg(2+) ion via substrate during catalysis.</text>
</comment>
<comment type="pathway">
    <text evidence="1">Carbohydrate degradation; glycolysis; pyruvate from D-glyceraldehyde 3-phosphate: step 4/5.</text>
</comment>
<comment type="subcellular location">
    <subcellularLocation>
        <location evidence="1">Cytoplasm</location>
    </subcellularLocation>
    <subcellularLocation>
        <location evidence="1">Secreted</location>
    </subcellularLocation>
    <subcellularLocation>
        <location evidence="1">Cell surface</location>
    </subcellularLocation>
    <text evidence="1">Fractions of enolase are present in both the cytoplasm and on the cell surface.</text>
</comment>
<comment type="similarity">
    <text evidence="1">Belongs to the enolase family.</text>
</comment>
<feature type="chain" id="PRO_1000019200" description="Enolase">
    <location>
        <begin position="1"/>
        <end position="414"/>
    </location>
</feature>
<feature type="active site" description="Proton donor" evidence="1">
    <location>
        <position position="204"/>
    </location>
</feature>
<feature type="active site" description="Proton acceptor" evidence="1">
    <location>
        <position position="332"/>
    </location>
</feature>
<feature type="binding site" evidence="1">
    <location>
        <position position="162"/>
    </location>
    <ligand>
        <name>(2R)-2-phosphoglycerate</name>
        <dbReference type="ChEBI" id="CHEBI:58289"/>
    </ligand>
</feature>
<feature type="binding site" evidence="1">
    <location>
        <position position="239"/>
    </location>
    <ligand>
        <name>Mg(2+)</name>
        <dbReference type="ChEBI" id="CHEBI:18420"/>
    </ligand>
</feature>
<feature type="binding site" evidence="1">
    <location>
        <position position="280"/>
    </location>
    <ligand>
        <name>Mg(2+)</name>
        <dbReference type="ChEBI" id="CHEBI:18420"/>
    </ligand>
</feature>
<feature type="binding site" evidence="1">
    <location>
        <position position="307"/>
    </location>
    <ligand>
        <name>Mg(2+)</name>
        <dbReference type="ChEBI" id="CHEBI:18420"/>
    </ligand>
</feature>
<feature type="binding site" evidence="1">
    <location>
        <position position="332"/>
    </location>
    <ligand>
        <name>(2R)-2-phosphoglycerate</name>
        <dbReference type="ChEBI" id="CHEBI:58289"/>
    </ligand>
</feature>
<feature type="binding site" evidence="1">
    <location>
        <position position="361"/>
    </location>
    <ligand>
        <name>(2R)-2-phosphoglycerate</name>
        <dbReference type="ChEBI" id="CHEBI:58289"/>
    </ligand>
</feature>
<feature type="binding site" evidence="1">
    <location>
        <position position="362"/>
    </location>
    <ligand>
        <name>(2R)-2-phosphoglycerate</name>
        <dbReference type="ChEBI" id="CHEBI:58289"/>
    </ligand>
</feature>
<feature type="binding site" evidence="1">
    <location>
        <position position="383"/>
    </location>
    <ligand>
        <name>(2R)-2-phosphoglycerate</name>
        <dbReference type="ChEBI" id="CHEBI:58289"/>
    </ligand>
</feature>
<protein>
    <recommendedName>
        <fullName evidence="1">Enolase</fullName>
        <ecNumber evidence="1">4.2.1.11</ecNumber>
    </recommendedName>
    <alternativeName>
        <fullName evidence="1">2-phospho-D-glycerate hydro-lyase</fullName>
    </alternativeName>
    <alternativeName>
        <fullName evidence="1">2-phosphoglycerate dehydratase</fullName>
    </alternativeName>
</protein>
<reference key="1">
    <citation type="submission" date="2007-07" db="EMBL/GenBank/DDBJ databases">
        <title>Complete genome sequence of Campylobacter jejuni subsp doylei 269.97 isolated from human blood.</title>
        <authorList>
            <person name="Fouts D.E."/>
            <person name="Mongodin E.F."/>
            <person name="Puiu D."/>
            <person name="Sebastian Y."/>
            <person name="Miller W.G."/>
            <person name="Mandrell R.E."/>
            <person name="Lastovica A.J."/>
            <person name="Nelson K.E."/>
        </authorList>
    </citation>
    <scope>NUCLEOTIDE SEQUENCE [LARGE SCALE GENOMIC DNA]</scope>
    <source>
        <strain>ATCC BAA-1458 / RM4099 / 269.97</strain>
    </source>
</reference>
<keyword id="KW-0963">Cytoplasm</keyword>
<keyword id="KW-0324">Glycolysis</keyword>
<keyword id="KW-0456">Lyase</keyword>
<keyword id="KW-0460">Magnesium</keyword>
<keyword id="KW-0479">Metal-binding</keyword>
<keyword id="KW-0964">Secreted</keyword>
<sequence>MLAIEDVRAYEVLDSRGNPTVKAEVTLSDGSVGAAIVPSGASTGSKEALELRDKDERFGGKGVLKAVANVNESIAGEILGLDAFNQTQLDDTLRELDGTKNYSNLGANATLGVSMAAARAAAAALGMPLYRYLGGANASILPVPMCNIINGGAHANNNVDFQEFMITPFGFTSFKEALRSVCEIYAILKKELANSGHSTALGDEGGFAPNLANNTEPIDLLMTCIKKAGYENRVKIALDVASTEFFKDGKYHMEDKAFSSEDLIERYVELCAKYPICSIEDGLAENDFEGWIKLTEKLGNKIQLVGDDLFVTNEDILREGIIKKMANAVLIKPNQIGTITQTMRTVRLAQRNNYKCVMSHRSGESEDAFIADFAVALNTGQIKTGALARGERTAKYNRLLEIELESDEYLGEKL</sequence>
<proteinExistence type="inferred from homology"/>
<gene>
    <name evidence="1" type="primary">eno</name>
    <name type="ordered locus">JJD26997_2046</name>
</gene>
<dbReference type="EC" id="4.2.1.11" evidence="1"/>
<dbReference type="EMBL" id="CP000768">
    <property type="protein sequence ID" value="ABS43338.1"/>
    <property type="molecule type" value="Genomic_DNA"/>
</dbReference>
<dbReference type="SMR" id="A7H622"/>
<dbReference type="KEGG" id="cjd:JJD26997_2046"/>
<dbReference type="HOGENOM" id="CLU_031223_2_1_7"/>
<dbReference type="UniPathway" id="UPA00109">
    <property type="reaction ID" value="UER00187"/>
</dbReference>
<dbReference type="Proteomes" id="UP000002302">
    <property type="component" value="Chromosome"/>
</dbReference>
<dbReference type="GO" id="GO:0009986">
    <property type="term" value="C:cell surface"/>
    <property type="evidence" value="ECO:0007669"/>
    <property type="project" value="UniProtKB-SubCell"/>
</dbReference>
<dbReference type="GO" id="GO:0005576">
    <property type="term" value="C:extracellular region"/>
    <property type="evidence" value="ECO:0007669"/>
    <property type="project" value="UniProtKB-SubCell"/>
</dbReference>
<dbReference type="GO" id="GO:0000015">
    <property type="term" value="C:phosphopyruvate hydratase complex"/>
    <property type="evidence" value="ECO:0007669"/>
    <property type="project" value="InterPro"/>
</dbReference>
<dbReference type="GO" id="GO:0000287">
    <property type="term" value="F:magnesium ion binding"/>
    <property type="evidence" value="ECO:0007669"/>
    <property type="project" value="UniProtKB-UniRule"/>
</dbReference>
<dbReference type="GO" id="GO:0004634">
    <property type="term" value="F:phosphopyruvate hydratase activity"/>
    <property type="evidence" value="ECO:0007669"/>
    <property type="project" value="UniProtKB-UniRule"/>
</dbReference>
<dbReference type="GO" id="GO:0006096">
    <property type="term" value="P:glycolytic process"/>
    <property type="evidence" value="ECO:0007669"/>
    <property type="project" value="UniProtKB-UniRule"/>
</dbReference>
<dbReference type="CDD" id="cd03313">
    <property type="entry name" value="enolase"/>
    <property type="match status" value="1"/>
</dbReference>
<dbReference type="Gene3D" id="3.20.20.120">
    <property type="entry name" value="Enolase-like C-terminal domain"/>
    <property type="match status" value="1"/>
</dbReference>
<dbReference type="Gene3D" id="3.30.390.10">
    <property type="entry name" value="Enolase-like, N-terminal domain"/>
    <property type="match status" value="1"/>
</dbReference>
<dbReference type="HAMAP" id="MF_00318">
    <property type="entry name" value="Enolase"/>
    <property type="match status" value="1"/>
</dbReference>
<dbReference type="InterPro" id="IPR000941">
    <property type="entry name" value="Enolase"/>
</dbReference>
<dbReference type="InterPro" id="IPR036849">
    <property type="entry name" value="Enolase-like_C_sf"/>
</dbReference>
<dbReference type="InterPro" id="IPR029017">
    <property type="entry name" value="Enolase-like_N"/>
</dbReference>
<dbReference type="InterPro" id="IPR020810">
    <property type="entry name" value="Enolase_C"/>
</dbReference>
<dbReference type="InterPro" id="IPR020809">
    <property type="entry name" value="Enolase_CS"/>
</dbReference>
<dbReference type="InterPro" id="IPR020811">
    <property type="entry name" value="Enolase_N"/>
</dbReference>
<dbReference type="NCBIfam" id="TIGR01060">
    <property type="entry name" value="eno"/>
    <property type="match status" value="1"/>
</dbReference>
<dbReference type="PANTHER" id="PTHR11902">
    <property type="entry name" value="ENOLASE"/>
    <property type="match status" value="1"/>
</dbReference>
<dbReference type="PANTHER" id="PTHR11902:SF1">
    <property type="entry name" value="ENOLASE"/>
    <property type="match status" value="1"/>
</dbReference>
<dbReference type="Pfam" id="PF00113">
    <property type="entry name" value="Enolase_C"/>
    <property type="match status" value="1"/>
</dbReference>
<dbReference type="Pfam" id="PF03952">
    <property type="entry name" value="Enolase_N"/>
    <property type="match status" value="1"/>
</dbReference>
<dbReference type="PIRSF" id="PIRSF001400">
    <property type="entry name" value="Enolase"/>
    <property type="match status" value="1"/>
</dbReference>
<dbReference type="PRINTS" id="PR00148">
    <property type="entry name" value="ENOLASE"/>
</dbReference>
<dbReference type="SFLD" id="SFLDF00002">
    <property type="entry name" value="enolase"/>
    <property type="match status" value="1"/>
</dbReference>
<dbReference type="SFLD" id="SFLDG00178">
    <property type="entry name" value="enolase"/>
    <property type="match status" value="1"/>
</dbReference>
<dbReference type="SMART" id="SM01192">
    <property type="entry name" value="Enolase_C"/>
    <property type="match status" value="1"/>
</dbReference>
<dbReference type="SMART" id="SM01193">
    <property type="entry name" value="Enolase_N"/>
    <property type="match status" value="1"/>
</dbReference>
<dbReference type="SUPFAM" id="SSF51604">
    <property type="entry name" value="Enolase C-terminal domain-like"/>
    <property type="match status" value="1"/>
</dbReference>
<dbReference type="SUPFAM" id="SSF54826">
    <property type="entry name" value="Enolase N-terminal domain-like"/>
    <property type="match status" value="1"/>
</dbReference>
<dbReference type="PROSITE" id="PS00164">
    <property type="entry name" value="ENOLASE"/>
    <property type="match status" value="1"/>
</dbReference>
<accession>A7H622</accession>